<protein>
    <recommendedName>
        <fullName evidence="1">Na(+)/H(+) antiporter NhaA</fullName>
    </recommendedName>
    <alternativeName>
        <fullName evidence="1">Sodium/proton antiporter NhaA</fullName>
    </alternativeName>
</protein>
<reference key="1">
    <citation type="journal article" date="2007" name="PLoS Genet.">
        <title>Genome analysis of Minibacterium massiliensis highlights the convergent evolution of water-living bacteria.</title>
        <authorList>
            <person name="Audic S."/>
            <person name="Robert C."/>
            <person name="Campagna B."/>
            <person name="Parinello H."/>
            <person name="Claverie J.-M."/>
            <person name="Raoult D."/>
            <person name="Drancourt M."/>
        </authorList>
    </citation>
    <scope>NUCLEOTIDE SEQUENCE [LARGE SCALE GENOMIC DNA]</scope>
    <source>
        <strain>Marseille</strain>
    </source>
</reference>
<proteinExistence type="inferred from homology"/>
<feature type="chain" id="PRO_0000334324" description="Na(+)/H(+) antiporter NhaA">
    <location>
        <begin position="1"/>
        <end position="453"/>
    </location>
</feature>
<feature type="transmembrane region" description="Helical" evidence="1">
    <location>
        <begin position="28"/>
        <end position="48"/>
    </location>
</feature>
<feature type="transmembrane region" description="Helical" evidence="1">
    <location>
        <begin position="79"/>
        <end position="99"/>
    </location>
</feature>
<feature type="transmembrane region" description="Helical" evidence="1">
    <location>
        <begin position="115"/>
        <end position="135"/>
    </location>
</feature>
<feature type="transmembrane region" description="Helical" evidence="1">
    <location>
        <begin position="144"/>
        <end position="164"/>
    </location>
</feature>
<feature type="transmembrane region" description="Helical" evidence="1">
    <location>
        <begin position="173"/>
        <end position="193"/>
    </location>
</feature>
<feature type="transmembrane region" description="Helical" evidence="1">
    <location>
        <begin position="196"/>
        <end position="216"/>
    </location>
</feature>
<feature type="transmembrane region" description="Helical" evidence="1">
    <location>
        <begin position="241"/>
        <end position="261"/>
    </location>
</feature>
<feature type="transmembrane region" description="Helical" evidence="1">
    <location>
        <begin position="321"/>
        <end position="341"/>
    </location>
</feature>
<feature type="transmembrane region" description="Helical" evidence="1">
    <location>
        <begin position="355"/>
        <end position="375"/>
    </location>
</feature>
<feature type="transmembrane region" description="Helical" evidence="1">
    <location>
        <begin position="393"/>
        <end position="413"/>
    </location>
</feature>
<feature type="transmembrane region" description="Helical" evidence="1">
    <location>
        <begin position="424"/>
        <end position="444"/>
    </location>
</feature>
<name>NHAA_JANMA</name>
<organism>
    <name type="scientific">Janthinobacterium sp. (strain Marseille)</name>
    <name type="common">Minibacterium massiliensis</name>
    <dbReference type="NCBI Taxonomy" id="375286"/>
    <lineage>
        <taxon>Bacteria</taxon>
        <taxon>Pseudomonadati</taxon>
        <taxon>Pseudomonadota</taxon>
        <taxon>Betaproteobacteria</taxon>
        <taxon>Burkholderiales</taxon>
        <taxon>Oxalobacteraceae</taxon>
        <taxon>Janthinobacterium</taxon>
    </lineage>
</organism>
<comment type="function">
    <text evidence="1">Na(+)/H(+) antiporter that extrudes sodium in exchange for external protons.</text>
</comment>
<comment type="catalytic activity">
    <reaction evidence="1">
        <text>Na(+)(in) + 2 H(+)(out) = Na(+)(out) + 2 H(+)(in)</text>
        <dbReference type="Rhea" id="RHEA:29251"/>
        <dbReference type="ChEBI" id="CHEBI:15378"/>
        <dbReference type="ChEBI" id="CHEBI:29101"/>
    </reaction>
    <physiologicalReaction direction="left-to-right" evidence="1">
        <dbReference type="Rhea" id="RHEA:29252"/>
    </physiologicalReaction>
</comment>
<comment type="subcellular location">
    <subcellularLocation>
        <location evidence="1">Cell inner membrane</location>
        <topology evidence="1">Multi-pass membrane protein</topology>
    </subcellularLocation>
</comment>
<comment type="similarity">
    <text evidence="1">Belongs to the NhaA Na(+)/H(+) (TC 2.A.33) antiporter family.</text>
</comment>
<sequence>MTPNTSPGSTLPRAQVLAERAFSTLEKFLHIEAFSGVVLLLAAAAALIWANSPYADGYHHFWHTAVSFSIGSWSVSESLHFLINDGLMTIFFLVVGMEIRREIHEGALANMRLAALPLAAALGGVVVPALIYFILNPGGEAAHGWAVPTATDIAFAVGVLALLGRSIPSNVRVFLLALAIIDDIVAVLIIAVFYSGGMDYSGFIIAAVGILMVLGMQRIGIASAYPYVIPGAVLWFGLLKTGAHPTLAGVVLGLMTPVFAPHARTHPLELASKALKDLWNQTANSTPDPHHLAHPLKQLRRAQRDLLPPVSRVQMALHPYVAFGIMPLFALANAGVSLDGIDMSATGSMSVMLGVLIALVAGKPLGIIGASFLMVRMGWCALPPGVTWGGVCLVGLLAGIGFTMSIFIATLAFNDPNLLGAAKLGILLASLSAAVLGLAWGFFQAKRKQPAVA</sequence>
<evidence type="ECO:0000255" key="1">
    <source>
        <dbReference type="HAMAP-Rule" id="MF_01844"/>
    </source>
</evidence>
<accession>A6SWX0</accession>
<keyword id="KW-0050">Antiport</keyword>
<keyword id="KW-0997">Cell inner membrane</keyword>
<keyword id="KW-1003">Cell membrane</keyword>
<keyword id="KW-0406">Ion transport</keyword>
<keyword id="KW-0472">Membrane</keyword>
<keyword id="KW-0915">Sodium</keyword>
<keyword id="KW-0739">Sodium transport</keyword>
<keyword id="KW-0812">Transmembrane</keyword>
<keyword id="KW-1133">Transmembrane helix</keyword>
<keyword id="KW-0813">Transport</keyword>
<gene>
    <name evidence="1" type="primary">nhaA</name>
    <name type="ordered locus">mma_1077</name>
</gene>
<dbReference type="EMBL" id="CP000269">
    <property type="protein sequence ID" value="ABR88479.1"/>
    <property type="molecule type" value="Genomic_DNA"/>
</dbReference>
<dbReference type="RefSeq" id="WP_012078934.1">
    <property type="nucleotide sequence ID" value="NC_009659.1"/>
</dbReference>
<dbReference type="SMR" id="A6SWX0"/>
<dbReference type="STRING" id="375286.mma_1077"/>
<dbReference type="KEGG" id="mms:mma_1077"/>
<dbReference type="eggNOG" id="COG3004">
    <property type="taxonomic scope" value="Bacteria"/>
</dbReference>
<dbReference type="HOGENOM" id="CLU_015803_1_2_4"/>
<dbReference type="OrthoDB" id="9808135at2"/>
<dbReference type="Proteomes" id="UP000006388">
    <property type="component" value="Chromosome"/>
</dbReference>
<dbReference type="GO" id="GO:0005886">
    <property type="term" value="C:plasma membrane"/>
    <property type="evidence" value="ECO:0007669"/>
    <property type="project" value="UniProtKB-SubCell"/>
</dbReference>
<dbReference type="GO" id="GO:0015385">
    <property type="term" value="F:sodium:proton antiporter activity"/>
    <property type="evidence" value="ECO:0007669"/>
    <property type="project" value="TreeGrafter"/>
</dbReference>
<dbReference type="GO" id="GO:0006885">
    <property type="term" value="P:regulation of pH"/>
    <property type="evidence" value="ECO:0007669"/>
    <property type="project" value="InterPro"/>
</dbReference>
<dbReference type="Gene3D" id="1.20.1530.10">
    <property type="entry name" value="Na+/H+ antiporter like domain"/>
    <property type="match status" value="1"/>
</dbReference>
<dbReference type="HAMAP" id="MF_01844">
    <property type="entry name" value="NhaA"/>
    <property type="match status" value="1"/>
</dbReference>
<dbReference type="InterPro" id="IPR023171">
    <property type="entry name" value="Na/H_antiporter_dom_sf"/>
</dbReference>
<dbReference type="InterPro" id="IPR004670">
    <property type="entry name" value="NhaA"/>
</dbReference>
<dbReference type="NCBIfam" id="TIGR00773">
    <property type="entry name" value="NhaA"/>
    <property type="match status" value="1"/>
</dbReference>
<dbReference type="PANTHER" id="PTHR30341:SF0">
    <property type="entry name" value="NA(+)_H(+) ANTIPORTER NHAA"/>
    <property type="match status" value="1"/>
</dbReference>
<dbReference type="PANTHER" id="PTHR30341">
    <property type="entry name" value="SODIUM ION/PROTON ANTIPORTER NHAA-RELATED"/>
    <property type="match status" value="1"/>
</dbReference>
<dbReference type="Pfam" id="PF06965">
    <property type="entry name" value="Na_H_antiport_1"/>
    <property type="match status" value="1"/>
</dbReference>